<organism>
    <name type="scientific">Streptomyces avermitilis (strain ATCC 31267 / DSM 46492 / JCM 5070 / NBRC 14893 / NCIMB 12804 / NRRL 8165 / MA-4680)</name>
    <dbReference type="NCBI Taxonomy" id="227882"/>
    <lineage>
        <taxon>Bacteria</taxon>
        <taxon>Bacillati</taxon>
        <taxon>Actinomycetota</taxon>
        <taxon>Actinomycetes</taxon>
        <taxon>Kitasatosporales</taxon>
        <taxon>Streptomycetaceae</taxon>
        <taxon>Streptomyces</taxon>
    </lineage>
</organism>
<keyword id="KW-0489">Methyltransferase</keyword>
<keyword id="KW-1185">Reference proteome</keyword>
<keyword id="KW-0949">S-adenosyl-L-methionine</keyword>
<keyword id="KW-0808">Transferase</keyword>
<keyword id="KW-0819">tRNA processing</keyword>
<proteinExistence type="inferred from homology"/>
<dbReference type="EC" id="2.1.1.33" evidence="2"/>
<dbReference type="EMBL" id="BA000030">
    <property type="protein sequence ID" value="BAC71827.1"/>
    <property type="molecule type" value="Genomic_DNA"/>
</dbReference>
<dbReference type="RefSeq" id="WP_010985544.1">
    <property type="nucleotide sequence ID" value="NZ_JZJK01000079.1"/>
</dbReference>
<dbReference type="SMR" id="P59721"/>
<dbReference type="GeneID" id="41541184"/>
<dbReference type="KEGG" id="sma:SAVERM_4115"/>
<dbReference type="eggNOG" id="COG0220">
    <property type="taxonomic scope" value="Bacteria"/>
</dbReference>
<dbReference type="HOGENOM" id="CLU_050910_0_1_11"/>
<dbReference type="OrthoDB" id="9802090at2"/>
<dbReference type="UniPathway" id="UPA00989"/>
<dbReference type="Proteomes" id="UP000000428">
    <property type="component" value="Chromosome"/>
</dbReference>
<dbReference type="GO" id="GO:0043527">
    <property type="term" value="C:tRNA methyltransferase complex"/>
    <property type="evidence" value="ECO:0007669"/>
    <property type="project" value="TreeGrafter"/>
</dbReference>
<dbReference type="GO" id="GO:0008176">
    <property type="term" value="F:tRNA (guanine(46)-N7)-methyltransferase activity"/>
    <property type="evidence" value="ECO:0007669"/>
    <property type="project" value="UniProtKB-UniRule"/>
</dbReference>
<dbReference type="FunFam" id="3.40.50.150:FF:000035">
    <property type="entry name" value="tRNA (guanine-N(7)-)-methyltransferase"/>
    <property type="match status" value="1"/>
</dbReference>
<dbReference type="Gene3D" id="3.40.50.150">
    <property type="entry name" value="Vaccinia Virus protein VP39"/>
    <property type="match status" value="1"/>
</dbReference>
<dbReference type="HAMAP" id="MF_01057">
    <property type="entry name" value="tRNA_methyltr_TrmB"/>
    <property type="match status" value="1"/>
</dbReference>
<dbReference type="InterPro" id="IPR029063">
    <property type="entry name" value="SAM-dependent_MTases_sf"/>
</dbReference>
<dbReference type="InterPro" id="IPR003358">
    <property type="entry name" value="tRNA_(Gua-N-7)_MeTrfase_Trmb"/>
</dbReference>
<dbReference type="InterPro" id="IPR055361">
    <property type="entry name" value="tRNA_methyltr_TrmB_bact"/>
</dbReference>
<dbReference type="NCBIfam" id="TIGR00091">
    <property type="entry name" value="tRNA (guanosine(46)-N7)-methyltransferase TrmB"/>
    <property type="match status" value="1"/>
</dbReference>
<dbReference type="PANTHER" id="PTHR23417">
    <property type="entry name" value="3-DEOXY-D-MANNO-OCTULOSONIC-ACID TRANSFERASE/TRNA GUANINE-N 7 - -METHYLTRANSFERASE"/>
    <property type="match status" value="1"/>
</dbReference>
<dbReference type="PANTHER" id="PTHR23417:SF14">
    <property type="entry name" value="PENTACOTRIPEPTIDE-REPEAT REGION OF PRORP DOMAIN-CONTAINING PROTEIN"/>
    <property type="match status" value="1"/>
</dbReference>
<dbReference type="Pfam" id="PF02390">
    <property type="entry name" value="Methyltransf_4"/>
    <property type="match status" value="1"/>
</dbReference>
<dbReference type="SUPFAM" id="SSF53335">
    <property type="entry name" value="S-adenosyl-L-methionine-dependent methyltransferases"/>
    <property type="match status" value="1"/>
</dbReference>
<dbReference type="PROSITE" id="PS51625">
    <property type="entry name" value="SAM_MT_TRMB"/>
    <property type="match status" value="1"/>
</dbReference>
<accession>P59721</accession>
<gene>
    <name evidence="2" type="primary">trmB</name>
    <name type="ordered locus">SAV_4115</name>
</gene>
<protein>
    <recommendedName>
        <fullName evidence="2">tRNA (guanine-N(7)-)-methyltransferase</fullName>
        <ecNumber evidence="2">2.1.1.33</ecNumber>
    </recommendedName>
    <alternativeName>
        <fullName evidence="2">tRNA (guanine(46)-N(7))-methyltransferase</fullName>
    </alternativeName>
    <alternativeName>
        <fullName evidence="2">tRNA(m7G46)-methyltransferase</fullName>
    </alternativeName>
</protein>
<name>TRMB_STRAW</name>
<reference key="1">
    <citation type="journal article" date="2001" name="Proc. Natl. Acad. Sci. U.S.A.">
        <title>Genome sequence of an industrial microorganism Streptomyces avermitilis: deducing the ability of producing secondary metabolites.</title>
        <authorList>
            <person name="Omura S."/>
            <person name="Ikeda H."/>
            <person name="Ishikawa J."/>
            <person name="Hanamoto A."/>
            <person name="Takahashi C."/>
            <person name="Shinose M."/>
            <person name="Takahashi Y."/>
            <person name="Horikawa H."/>
            <person name="Nakazawa H."/>
            <person name="Osonoe T."/>
            <person name="Kikuchi H."/>
            <person name="Shiba T."/>
            <person name="Sakaki Y."/>
            <person name="Hattori M."/>
        </authorList>
    </citation>
    <scope>NUCLEOTIDE SEQUENCE [LARGE SCALE GENOMIC DNA]</scope>
    <source>
        <strain>ATCC 31267 / DSM 46492 / JCM 5070 / NBRC 14893 / NCIMB 12804 / NRRL 8165 / MA-4680</strain>
    </source>
</reference>
<reference key="2">
    <citation type="journal article" date="2003" name="Nat. Biotechnol.">
        <title>Complete genome sequence and comparative analysis of the industrial microorganism Streptomyces avermitilis.</title>
        <authorList>
            <person name="Ikeda H."/>
            <person name="Ishikawa J."/>
            <person name="Hanamoto A."/>
            <person name="Shinose M."/>
            <person name="Kikuchi H."/>
            <person name="Shiba T."/>
            <person name="Sakaki Y."/>
            <person name="Hattori M."/>
            <person name="Omura S."/>
        </authorList>
    </citation>
    <scope>NUCLEOTIDE SEQUENCE [LARGE SCALE GENOMIC DNA]</scope>
    <source>
        <strain>ATCC 31267 / DSM 46492 / JCM 5070 / NBRC 14893 / NCIMB 12804 / NRRL 8165 / MA-4680</strain>
    </source>
</reference>
<comment type="function">
    <text evidence="2">Catalyzes the formation of N(7)-methylguanine at position 46 (m7G46) in tRNA.</text>
</comment>
<comment type="catalytic activity">
    <reaction evidence="2">
        <text>guanosine(46) in tRNA + S-adenosyl-L-methionine = N(7)-methylguanosine(46) in tRNA + S-adenosyl-L-homocysteine</text>
        <dbReference type="Rhea" id="RHEA:42708"/>
        <dbReference type="Rhea" id="RHEA-COMP:10188"/>
        <dbReference type="Rhea" id="RHEA-COMP:10189"/>
        <dbReference type="ChEBI" id="CHEBI:57856"/>
        <dbReference type="ChEBI" id="CHEBI:59789"/>
        <dbReference type="ChEBI" id="CHEBI:74269"/>
        <dbReference type="ChEBI" id="CHEBI:74480"/>
        <dbReference type="EC" id="2.1.1.33"/>
    </reaction>
</comment>
<comment type="pathway">
    <text evidence="2">tRNA modification; N(7)-methylguanine-tRNA biosynthesis.</text>
</comment>
<comment type="similarity">
    <text evidence="2">Belongs to the class I-like SAM-binding methyltransferase superfamily. TrmB family.</text>
</comment>
<feature type="chain" id="PRO_0000171400" description="tRNA (guanine-N(7)-)-methyltransferase">
    <location>
        <begin position="1"/>
        <end position="290"/>
    </location>
</feature>
<feature type="region of interest" description="Disordered" evidence="3">
    <location>
        <begin position="1"/>
        <end position="49"/>
    </location>
</feature>
<feature type="compositionally biased region" description="Basic and acidic residues" evidence="3">
    <location>
        <begin position="1"/>
        <end position="12"/>
    </location>
</feature>
<feature type="compositionally biased region" description="Basic and acidic residues" evidence="3">
    <location>
        <begin position="20"/>
        <end position="43"/>
    </location>
</feature>
<feature type="active site" evidence="1">
    <location>
        <position position="179"/>
    </location>
</feature>
<feature type="binding site" evidence="2">
    <location>
        <position position="104"/>
    </location>
    <ligand>
        <name>S-adenosyl-L-methionine</name>
        <dbReference type="ChEBI" id="CHEBI:59789"/>
    </ligand>
</feature>
<feature type="binding site" evidence="2">
    <location>
        <position position="129"/>
    </location>
    <ligand>
        <name>S-adenosyl-L-methionine</name>
        <dbReference type="ChEBI" id="CHEBI:59789"/>
    </ligand>
</feature>
<feature type="binding site" evidence="2">
    <location>
        <position position="156"/>
    </location>
    <ligand>
        <name>S-adenosyl-L-methionine</name>
        <dbReference type="ChEBI" id="CHEBI:59789"/>
    </ligand>
</feature>
<feature type="binding site" evidence="2">
    <location>
        <position position="179"/>
    </location>
    <ligand>
        <name>S-adenosyl-L-methionine</name>
        <dbReference type="ChEBI" id="CHEBI:59789"/>
    </ligand>
</feature>
<feature type="binding site" evidence="2">
    <location>
        <position position="183"/>
    </location>
    <ligand>
        <name>substrate</name>
    </ligand>
</feature>
<feature type="binding site" evidence="2">
    <location>
        <position position="215"/>
    </location>
    <ligand>
        <name>substrate</name>
    </ligand>
</feature>
<feature type="binding site" evidence="2">
    <location>
        <begin position="252"/>
        <end position="255"/>
    </location>
    <ligand>
        <name>substrate</name>
    </ligand>
</feature>
<sequence length="290" mass="32245">MSDSLHTPEEPRPGPGEQLAHAHDGSLRHTRAKGEPRFPDGPKADPAGSHFERRIRSFQPRRSRVTAGQADALQRLWPKWGLDIDGHALDLTELFGNTHPVVLEIGFGMGEATARMAAEDPDTGILAVDVHTPGQGNLLNLADQHGLTNIRVANGDAIILLREMLPPDSLDGLRVYFPDPWPKKRHHKRRLIQPEFLTLAATRLRPGALVHCATDWEPYAEQMLDVLTAHPDFENTQPTGGYAPRPGFRPLTRFEGQGLDKGHVVNDLLFRRVQPRDQHRDLPPSATEAD</sequence>
<evidence type="ECO:0000250" key="1"/>
<evidence type="ECO:0000255" key="2">
    <source>
        <dbReference type="HAMAP-Rule" id="MF_01057"/>
    </source>
</evidence>
<evidence type="ECO:0000256" key="3">
    <source>
        <dbReference type="SAM" id="MobiDB-lite"/>
    </source>
</evidence>